<proteinExistence type="inferred from homology"/>
<protein>
    <recommendedName>
        <fullName evidence="1">Glucans biosynthesis protein C</fullName>
        <ecNumber evidence="1">2.1.-.-</ecNumber>
    </recommendedName>
</protein>
<feature type="chain" id="PRO_1000136572" description="Glucans biosynthesis protein C">
    <location>
        <begin position="1"/>
        <end position="384"/>
    </location>
</feature>
<feature type="transmembrane region" description="Helical" evidence="1">
    <location>
        <begin position="17"/>
        <end position="37"/>
    </location>
</feature>
<feature type="transmembrane region" description="Helical" evidence="1">
    <location>
        <begin position="54"/>
        <end position="74"/>
    </location>
</feature>
<feature type="transmembrane region" description="Helical" evidence="1">
    <location>
        <begin position="91"/>
        <end position="111"/>
    </location>
</feature>
<feature type="transmembrane region" description="Helical" evidence="1">
    <location>
        <begin position="140"/>
        <end position="160"/>
    </location>
</feature>
<feature type="transmembrane region" description="Helical" evidence="1">
    <location>
        <begin position="173"/>
        <end position="193"/>
    </location>
</feature>
<feature type="transmembrane region" description="Helical" evidence="1">
    <location>
        <begin position="212"/>
        <end position="232"/>
    </location>
</feature>
<feature type="transmembrane region" description="Helical" evidence="1">
    <location>
        <begin position="240"/>
        <end position="260"/>
    </location>
</feature>
<feature type="transmembrane region" description="Helical" evidence="1">
    <location>
        <begin position="274"/>
        <end position="294"/>
    </location>
</feature>
<feature type="transmembrane region" description="Helical" evidence="1">
    <location>
        <begin position="311"/>
        <end position="331"/>
    </location>
</feature>
<feature type="transmembrane region" description="Helical" evidence="1">
    <location>
        <begin position="338"/>
        <end position="358"/>
    </location>
</feature>
<name>OPGC_SALEP</name>
<gene>
    <name evidence="1" type="primary">mdoC</name>
    <name evidence="1" type="synonym">opgC</name>
    <name type="ordered locus">SEN1899</name>
</gene>
<reference key="1">
    <citation type="journal article" date="2008" name="Genome Res.">
        <title>Comparative genome analysis of Salmonella enteritidis PT4 and Salmonella gallinarum 287/91 provides insights into evolutionary and host adaptation pathways.</title>
        <authorList>
            <person name="Thomson N.R."/>
            <person name="Clayton D.J."/>
            <person name="Windhorst D."/>
            <person name="Vernikos G."/>
            <person name="Davidson S."/>
            <person name="Churcher C."/>
            <person name="Quail M.A."/>
            <person name="Stevens M."/>
            <person name="Jones M.A."/>
            <person name="Watson M."/>
            <person name="Barron A."/>
            <person name="Layton A."/>
            <person name="Pickard D."/>
            <person name="Kingsley R.A."/>
            <person name="Bignell A."/>
            <person name="Clark L."/>
            <person name="Harris B."/>
            <person name="Ormond D."/>
            <person name="Abdellah Z."/>
            <person name="Brooks K."/>
            <person name="Cherevach I."/>
            <person name="Chillingworth T."/>
            <person name="Woodward J."/>
            <person name="Norberczak H."/>
            <person name="Lord A."/>
            <person name="Arrowsmith C."/>
            <person name="Jagels K."/>
            <person name="Moule S."/>
            <person name="Mungall K."/>
            <person name="Saunders M."/>
            <person name="Whitehead S."/>
            <person name="Chabalgoity J.A."/>
            <person name="Maskell D."/>
            <person name="Humphreys T."/>
            <person name="Roberts M."/>
            <person name="Barrow P.A."/>
            <person name="Dougan G."/>
            <person name="Parkhill J."/>
        </authorList>
    </citation>
    <scope>NUCLEOTIDE SEQUENCE [LARGE SCALE GENOMIC DNA]</scope>
    <source>
        <strain>P125109</strain>
    </source>
</reference>
<evidence type="ECO:0000255" key="1">
    <source>
        <dbReference type="HAMAP-Rule" id="MF_01066"/>
    </source>
</evidence>
<comment type="function">
    <text evidence="1">Necessary for the succinyl substitution of periplasmic glucans. Could catalyze the transfer of succinyl residues from the cytoplasmic side of the membrane to the nascent glucan backbones on the periplasmic side of the membrane.</text>
</comment>
<comment type="pathway">
    <text evidence="1">Glycan metabolism; osmoregulated periplasmic glucan (OPG) biosynthesis.</text>
</comment>
<comment type="subcellular location">
    <subcellularLocation>
        <location evidence="1">Cell membrane</location>
        <topology evidence="1">Multi-pass membrane protein</topology>
    </subcellularLocation>
</comment>
<comment type="similarity">
    <text evidence="1">Belongs to the acyltransferase 3 family. OpgC subfamily.</text>
</comment>
<accession>B5QY16</accession>
<sequence>MSSVPAPREYFLDSIRAWLMLLGIPFHISLIYSTHSWHVNSATPSWWLTLFNDFIHAFRMQVFFVISGYFSYMLFLRYPLKRWWKVRVERVGIPMLTAIPLLTLPQFILLQYVKEKTENWPTLSAYEKYNTLAWELISHLWFLLVLVILTTVSIGIFTWFQKRQETSKPRPAAISLVRLSLIFFLLGMAYAAIRRIIFIVYPAILSDGMFNFIVMQTLFYVPFFILGALAFIHPDLKARFTTPSRGCTLGAAVAFIAYLLNQRYGSGDAWMYETESVITMVMGLWMVNVVFSLGHRLLNFQSARVTYFVNASLFIYLVHHPLTLFFGAYITPHISSNLIGFLCGLIFVMGIALILYEIHLRIPLLKFLFSGKPPVKQESRAAIG</sequence>
<organism>
    <name type="scientific">Salmonella enteritidis PT4 (strain P125109)</name>
    <dbReference type="NCBI Taxonomy" id="550537"/>
    <lineage>
        <taxon>Bacteria</taxon>
        <taxon>Pseudomonadati</taxon>
        <taxon>Pseudomonadota</taxon>
        <taxon>Gammaproteobacteria</taxon>
        <taxon>Enterobacterales</taxon>
        <taxon>Enterobacteriaceae</taxon>
        <taxon>Salmonella</taxon>
    </lineage>
</organism>
<keyword id="KW-0012">Acyltransferase</keyword>
<keyword id="KW-1003">Cell membrane</keyword>
<keyword id="KW-0472">Membrane</keyword>
<keyword id="KW-0808">Transferase</keyword>
<keyword id="KW-0812">Transmembrane</keyword>
<keyword id="KW-1133">Transmembrane helix</keyword>
<dbReference type="EC" id="2.1.-.-" evidence="1"/>
<dbReference type="EMBL" id="AM933172">
    <property type="protein sequence ID" value="CAR33479.1"/>
    <property type="molecule type" value="Genomic_DNA"/>
</dbReference>
<dbReference type="RefSeq" id="WP_000100071.1">
    <property type="nucleotide sequence ID" value="NC_011294.1"/>
</dbReference>
<dbReference type="KEGG" id="set:SEN1899"/>
<dbReference type="HOGENOM" id="CLU_036182_2_0_6"/>
<dbReference type="UniPathway" id="UPA00637"/>
<dbReference type="Proteomes" id="UP000000613">
    <property type="component" value="Chromosome"/>
</dbReference>
<dbReference type="GO" id="GO:0005886">
    <property type="term" value="C:plasma membrane"/>
    <property type="evidence" value="ECO:0007669"/>
    <property type="project" value="UniProtKB-SubCell"/>
</dbReference>
<dbReference type="GO" id="GO:0016747">
    <property type="term" value="F:acyltransferase activity, transferring groups other than amino-acyl groups"/>
    <property type="evidence" value="ECO:0007669"/>
    <property type="project" value="InterPro"/>
</dbReference>
<dbReference type="GO" id="GO:0016741">
    <property type="term" value="F:transferase activity, transferring one-carbon groups"/>
    <property type="evidence" value="ECO:0007669"/>
    <property type="project" value="UniProtKB-UniRule"/>
</dbReference>
<dbReference type="GO" id="GO:0009250">
    <property type="term" value="P:glucan biosynthetic process"/>
    <property type="evidence" value="ECO:0007669"/>
    <property type="project" value="UniProtKB-UniRule"/>
</dbReference>
<dbReference type="HAMAP" id="MF_01066">
    <property type="entry name" value="MdoC_OpgC"/>
    <property type="match status" value="1"/>
</dbReference>
<dbReference type="InterPro" id="IPR002656">
    <property type="entry name" value="Acyl_transf_3_dom"/>
</dbReference>
<dbReference type="InterPro" id="IPR050623">
    <property type="entry name" value="Glucan_succinyl_AcylTrfase"/>
</dbReference>
<dbReference type="InterPro" id="IPR023723">
    <property type="entry name" value="Glucans_biosynth_C"/>
</dbReference>
<dbReference type="NCBIfam" id="NF003014">
    <property type="entry name" value="PRK03854.1"/>
    <property type="match status" value="1"/>
</dbReference>
<dbReference type="PANTHER" id="PTHR36927">
    <property type="entry name" value="BLR4337 PROTEIN"/>
    <property type="match status" value="1"/>
</dbReference>
<dbReference type="PANTHER" id="PTHR36927:SF3">
    <property type="entry name" value="GLUCANS BIOSYNTHESIS PROTEIN C"/>
    <property type="match status" value="1"/>
</dbReference>
<dbReference type="Pfam" id="PF01757">
    <property type="entry name" value="Acyl_transf_3"/>
    <property type="match status" value="1"/>
</dbReference>